<gene>
    <name evidence="1" type="primary">nfuA</name>
    <name type="ordered locus">EFER_3383</name>
</gene>
<evidence type="ECO:0000255" key="1">
    <source>
        <dbReference type="HAMAP-Rule" id="MF_01637"/>
    </source>
</evidence>
<comment type="function">
    <text evidence="1">Involved in iron-sulfur cluster biogenesis. Binds a 4Fe-4S cluster, can transfer this cluster to apoproteins, and thereby intervenes in the maturation of Fe/S proteins. Could also act as a scaffold/chaperone for damaged Fe/S proteins.</text>
</comment>
<comment type="cofactor">
    <cofactor evidence="1">
        <name>[4Fe-4S] cluster</name>
        <dbReference type="ChEBI" id="CHEBI:49883"/>
    </cofactor>
    <text evidence="1">Binds 1 [4Fe-4S] cluster per subunit. The cluster is presumably bound at the interface of two monomers.</text>
</comment>
<comment type="subunit">
    <text evidence="1">Homodimer.</text>
</comment>
<comment type="similarity">
    <text evidence="1">Belongs to the NfuA family.</text>
</comment>
<sequence>MIRISDAAQAHFAKLLANQEEGTQIRVFVINPGTPNAECGVSYCPPDAVEATDTALKFDLLTAYVDELSAPYLEDAEIDFVTDQLGSQLTLKAPNAKMRKVADDAPLMERVEYMLQSQINPQLAGHGGRVSLMEITEDGYAILQFGGGCNGCSMVDVTLKEGIEKQLLNEFPELKGVRDLTEHQRGEHSYY</sequence>
<dbReference type="EMBL" id="CU928158">
    <property type="protein sequence ID" value="CAQ90860.1"/>
    <property type="molecule type" value="Genomic_DNA"/>
</dbReference>
<dbReference type="RefSeq" id="WP_000619389.1">
    <property type="nucleotide sequence ID" value="NC_011740.1"/>
</dbReference>
<dbReference type="SMR" id="B7LSB7"/>
<dbReference type="GeneID" id="93778582"/>
<dbReference type="KEGG" id="efe:EFER_3383"/>
<dbReference type="HOGENOM" id="CLU_094569_0_0_6"/>
<dbReference type="OrthoDB" id="9785450at2"/>
<dbReference type="Proteomes" id="UP000000745">
    <property type="component" value="Chromosome"/>
</dbReference>
<dbReference type="GO" id="GO:0051539">
    <property type="term" value="F:4 iron, 4 sulfur cluster binding"/>
    <property type="evidence" value="ECO:0007669"/>
    <property type="project" value="UniProtKB-UniRule"/>
</dbReference>
<dbReference type="GO" id="GO:0005506">
    <property type="term" value="F:iron ion binding"/>
    <property type="evidence" value="ECO:0007669"/>
    <property type="project" value="InterPro"/>
</dbReference>
<dbReference type="GO" id="GO:0016226">
    <property type="term" value="P:iron-sulfur cluster assembly"/>
    <property type="evidence" value="ECO:0007669"/>
    <property type="project" value="UniProtKB-UniRule"/>
</dbReference>
<dbReference type="GO" id="GO:0051604">
    <property type="term" value="P:protein maturation"/>
    <property type="evidence" value="ECO:0007669"/>
    <property type="project" value="UniProtKB-UniRule"/>
</dbReference>
<dbReference type="FunFam" id="2.60.300.12:FF:000004">
    <property type="entry name" value="Fe/S biogenesis protein NfuA"/>
    <property type="match status" value="1"/>
</dbReference>
<dbReference type="FunFam" id="3.30.300.130:FF:000002">
    <property type="entry name" value="Fe/S biogenesis protein NfuA"/>
    <property type="match status" value="1"/>
</dbReference>
<dbReference type="Gene3D" id="3.30.300.130">
    <property type="entry name" value="Fe-S cluster assembly (FSCA)"/>
    <property type="match status" value="1"/>
</dbReference>
<dbReference type="Gene3D" id="2.60.300.12">
    <property type="entry name" value="HesB-like domain"/>
    <property type="match status" value="1"/>
</dbReference>
<dbReference type="HAMAP" id="MF_01637">
    <property type="entry name" value="Fe_S_biogen_NfuA"/>
    <property type="match status" value="1"/>
</dbReference>
<dbReference type="InterPro" id="IPR017726">
    <property type="entry name" value="Fe/S_biogenesis_protein_NfuA"/>
</dbReference>
<dbReference type="InterPro" id="IPR000361">
    <property type="entry name" value="FeS_biogenesis"/>
</dbReference>
<dbReference type="InterPro" id="IPR034904">
    <property type="entry name" value="FSCA_dom_sf"/>
</dbReference>
<dbReference type="InterPro" id="IPR035903">
    <property type="entry name" value="HesB-like_dom_sf"/>
</dbReference>
<dbReference type="InterPro" id="IPR001075">
    <property type="entry name" value="NIF_FeS_clus_asmbl_NifU_C"/>
</dbReference>
<dbReference type="NCBIfam" id="NF008392">
    <property type="entry name" value="PRK11190.1"/>
    <property type="match status" value="1"/>
</dbReference>
<dbReference type="NCBIfam" id="TIGR03341">
    <property type="entry name" value="YhgI_GntY"/>
    <property type="match status" value="1"/>
</dbReference>
<dbReference type="PANTHER" id="PTHR11178:SF51">
    <property type="entry name" value="FE_S BIOGENESIS PROTEIN NFUA"/>
    <property type="match status" value="1"/>
</dbReference>
<dbReference type="PANTHER" id="PTHR11178">
    <property type="entry name" value="IRON-SULFUR CLUSTER SCAFFOLD PROTEIN NFU-RELATED"/>
    <property type="match status" value="1"/>
</dbReference>
<dbReference type="Pfam" id="PF01521">
    <property type="entry name" value="Fe-S_biosyn"/>
    <property type="match status" value="1"/>
</dbReference>
<dbReference type="Pfam" id="PF01106">
    <property type="entry name" value="NifU"/>
    <property type="match status" value="1"/>
</dbReference>
<dbReference type="SUPFAM" id="SSF117916">
    <property type="entry name" value="Fe-S cluster assembly (FSCA) domain-like"/>
    <property type="match status" value="1"/>
</dbReference>
<dbReference type="SUPFAM" id="SSF89360">
    <property type="entry name" value="HesB-like domain"/>
    <property type="match status" value="1"/>
</dbReference>
<protein>
    <recommendedName>
        <fullName evidence="1">Fe/S biogenesis protein NfuA</fullName>
    </recommendedName>
</protein>
<name>NFUA_ESCF3</name>
<organism>
    <name type="scientific">Escherichia fergusonii (strain ATCC 35469 / DSM 13698 / CCUG 18766 / IAM 14443 / JCM 21226 / LMG 7866 / NBRC 102419 / NCTC 12128 / CDC 0568-73)</name>
    <dbReference type="NCBI Taxonomy" id="585054"/>
    <lineage>
        <taxon>Bacteria</taxon>
        <taxon>Pseudomonadati</taxon>
        <taxon>Pseudomonadota</taxon>
        <taxon>Gammaproteobacteria</taxon>
        <taxon>Enterobacterales</taxon>
        <taxon>Enterobacteriaceae</taxon>
        <taxon>Escherichia</taxon>
    </lineage>
</organism>
<reference key="1">
    <citation type="journal article" date="2009" name="PLoS Genet.">
        <title>Organised genome dynamics in the Escherichia coli species results in highly diverse adaptive paths.</title>
        <authorList>
            <person name="Touchon M."/>
            <person name="Hoede C."/>
            <person name="Tenaillon O."/>
            <person name="Barbe V."/>
            <person name="Baeriswyl S."/>
            <person name="Bidet P."/>
            <person name="Bingen E."/>
            <person name="Bonacorsi S."/>
            <person name="Bouchier C."/>
            <person name="Bouvet O."/>
            <person name="Calteau A."/>
            <person name="Chiapello H."/>
            <person name="Clermont O."/>
            <person name="Cruveiller S."/>
            <person name="Danchin A."/>
            <person name="Diard M."/>
            <person name="Dossat C."/>
            <person name="Karoui M.E."/>
            <person name="Frapy E."/>
            <person name="Garry L."/>
            <person name="Ghigo J.M."/>
            <person name="Gilles A.M."/>
            <person name="Johnson J."/>
            <person name="Le Bouguenec C."/>
            <person name="Lescat M."/>
            <person name="Mangenot S."/>
            <person name="Martinez-Jehanne V."/>
            <person name="Matic I."/>
            <person name="Nassif X."/>
            <person name="Oztas S."/>
            <person name="Petit M.A."/>
            <person name="Pichon C."/>
            <person name="Rouy Z."/>
            <person name="Ruf C.S."/>
            <person name="Schneider D."/>
            <person name="Tourret J."/>
            <person name="Vacherie B."/>
            <person name="Vallenet D."/>
            <person name="Medigue C."/>
            <person name="Rocha E.P.C."/>
            <person name="Denamur E."/>
        </authorList>
    </citation>
    <scope>NUCLEOTIDE SEQUENCE [LARGE SCALE GENOMIC DNA]</scope>
    <source>
        <strain>ATCC 35469 / DSM 13698 / BCRC 15582 / CCUG 18766 / IAM 14443 / JCM 21226 / LMG 7866 / NBRC 102419 / NCTC 12128 / CDC 0568-73</strain>
    </source>
</reference>
<accession>B7LSB7</accession>
<feature type="chain" id="PRO_1000186754" description="Fe/S biogenesis protein NfuA">
    <location>
        <begin position="1"/>
        <end position="191"/>
    </location>
</feature>
<feature type="binding site" evidence="1">
    <location>
        <position position="149"/>
    </location>
    <ligand>
        <name>[4Fe-4S] cluster</name>
        <dbReference type="ChEBI" id="CHEBI:49883"/>
    </ligand>
</feature>
<feature type="binding site" evidence="1">
    <location>
        <position position="152"/>
    </location>
    <ligand>
        <name>[4Fe-4S] cluster</name>
        <dbReference type="ChEBI" id="CHEBI:49883"/>
    </ligand>
</feature>
<keyword id="KW-0004">4Fe-4S</keyword>
<keyword id="KW-0408">Iron</keyword>
<keyword id="KW-0411">Iron-sulfur</keyword>
<keyword id="KW-0479">Metal-binding</keyword>
<proteinExistence type="inferred from homology"/>